<feature type="chain" id="PRO_0000333120" description="Na(+)/H(+) antiporter NhaB">
    <location>
        <begin position="1"/>
        <end position="514"/>
    </location>
</feature>
<feature type="transmembrane region" description="Helical" evidence="1">
    <location>
        <begin position="23"/>
        <end position="43"/>
    </location>
</feature>
<feature type="transmembrane region" description="Helical" evidence="1">
    <location>
        <begin position="63"/>
        <end position="83"/>
    </location>
</feature>
<feature type="transmembrane region" description="Helical" evidence="1">
    <location>
        <begin position="97"/>
        <end position="117"/>
    </location>
</feature>
<feature type="transmembrane region" description="Helical" evidence="1">
    <location>
        <begin position="120"/>
        <end position="140"/>
    </location>
</feature>
<feature type="transmembrane region" description="Helical" evidence="1">
    <location>
        <begin position="144"/>
        <end position="164"/>
    </location>
</feature>
<feature type="transmembrane region" description="Helical" evidence="1">
    <location>
        <begin position="202"/>
        <end position="222"/>
    </location>
</feature>
<feature type="transmembrane region" description="Helical" evidence="1">
    <location>
        <begin position="238"/>
        <end position="258"/>
    </location>
</feature>
<feature type="transmembrane region" description="Helical" evidence="1">
    <location>
        <begin position="303"/>
        <end position="323"/>
    </location>
</feature>
<feature type="transmembrane region" description="Helical" evidence="1">
    <location>
        <begin position="357"/>
        <end position="377"/>
    </location>
</feature>
<feature type="transmembrane region" description="Helical" evidence="1">
    <location>
        <begin position="391"/>
        <end position="411"/>
    </location>
</feature>
<feature type="transmembrane region" description="Helical" evidence="1">
    <location>
        <begin position="447"/>
        <end position="467"/>
    </location>
</feature>
<feature type="transmembrane region" description="Helical" evidence="1">
    <location>
        <begin position="475"/>
        <end position="495"/>
    </location>
</feature>
<reference key="1">
    <citation type="journal article" date="2001" name="Nature">
        <title>Complete genome sequence of a multiple drug resistant Salmonella enterica serovar Typhi CT18.</title>
        <authorList>
            <person name="Parkhill J."/>
            <person name="Dougan G."/>
            <person name="James K.D."/>
            <person name="Thomson N.R."/>
            <person name="Pickard D."/>
            <person name="Wain J."/>
            <person name="Churcher C.M."/>
            <person name="Mungall K.L."/>
            <person name="Bentley S.D."/>
            <person name="Holden M.T.G."/>
            <person name="Sebaihia M."/>
            <person name="Baker S."/>
            <person name="Basham D."/>
            <person name="Brooks K."/>
            <person name="Chillingworth T."/>
            <person name="Connerton P."/>
            <person name="Cronin A."/>
            <person name="Davis P."/>
            <person name="Davies R.M."/>
            <person name="Dowd L."/>
            <person name="White N."/>
            <person name="Farrar J."/>
            <person name="Feltwell T."/>
            <person name="Hamlin N."/>
            <person name="Haque A."/>
            <person name="Hien T.T."/>
            <person name="Holroyd S."/>
            <person name="Jagels K."/>
            <person name="Krogh A."/>
            <person name="Larsen T.S."/>
            <person name="Leather S."/>
            <person name="Moule S."/>
            <person name="O'Gaora P."/>
            <person name="Parry C."/>
            <person name="Quail M.A."/>
            <person name="Rutherford K.M."/>
            <person name="Simmonds M."/>
            <person name="Skelton J."/>
            <person name="Stevens K."/>
            <person name="Whitehead S."/>
            <person name="Barrell B.G."/>
        </authorList>
    </citation>
    <scope>NUCLEOTIDE SEQUENCE [LARGE SCALE GENOMIC DNA]</scope>
    <source>
        <strain>CT18</strain>
    </source>
</reference>
<reference key="2">
    <citation type="journal article" date="2003" name="J. Bacteriol.">
        <title>Comparative genomics of Salmonella enterica serovar Typhi strains Ty2 and CT18.</title>
        <authorList>
            <person name="Deng W."/>
            <person name="Liou S.-R."/>
            <person name="Plunkett G. III"/>
            <person name="Mayhew G.F."/>
            <person name="Rose D.J."/>
            <person name="Burland V."/>
            <person name="Kodoyianni V."/>
            <person name="Schwartz D.C."/>
            <person name="Blattner F.R."/>
        </authorList>
    </citation>
    <scope>NUCLEOTIDE SEQUENCE [LARGE SCALE GENOMIC DNA]</scope>
    <source>
        <strain>ATCC 700931 / Ty2</strain>
    </source>
</reference>
<name>NHAB_SALTI</name>
<evidence type="ECO:0000255" key="1">
    <source>
        <dbReference type="HAMAP-Rule" id="MF_01599"/>
    </source>
</evidence>
<accession>Q8Z684</accession>
<accession>Q7CAF8</accession>
<comment type="function">
    <text evidence="1">Na(+)/H(+) antiporter that extrudes sodium in exchange for external protons.</text>
</comment>
<comment type="catalytic activity">
    <reaction evidence="1">
        <text>2 Na(+)(in) + 3 H(+)(out) = 2 Na(+)(out) + 3 H(+)(in)</text>
        <dbReference type="Rhea" id="RHEA:29247"/>
        <dbReference type="ChEBI" id="CHEBI:15378"/>
        <dbReference type="ChEBI" id="CHEBI:29101"/>
    </reaction>
    <physiologicalReaction direction="left-to-right" evidence="1">
        <dbReference type="Rhea" id="RHEA:29248"/>
    </physiologicalReaction>
</comment>
<comment type="subcellular location">
    <subcellularLocation>
        <location evidence="1">Cell inner membrane</location>
        <topology evidence="1">Multi-pass membrane protein</topology>
    </subcellularLocation>
</comment>
<comment type="similarity">
    <text evidence="1">Belongs to the NhaB Na(+)/H(+) (TC 2.A.34) antiporter family.</text>
</comment>
<gene>
    <name evidence="1" type="primary">nhaB</name>
    <name type="ordered locus">STY1935</name>
    <name type="ordered locus">t1071</name>
</gene>
<sequence>MEISWGRAMWRNFLGQSPDWYKLALLVFLIVNPFIFLANPFVAGWLLVAEFIFTLAMALKCYPLLPGGLLAIEAVIIGMTSAAHVREEVAANLEVLLLLMFMVAGIYFMKQLLLFIFTRLLLSIRSKMVLSLAFCVAAAFLSAFLDALTVVAVVISVAVGFYGIYHRVASSRGEENDMLDDSHIDPHYKTVLEQFRGFLRSLMMHAGVGTALGGVMTMVGEPQNLIIAKAAGWHFGDFFLRMSPVTVPVLVCGLLTCMLVEKMRWFGYGETLPEKVRDVLQQFDDQSRKKRTRQDKIKLIVQAVIGVWLVTALALHLAEVGLIGLSVIILATALTGVTDEHAIGKAFTESLPFTALLTVFFSIVAVIIDQHLFAPIIQFVLQASEHAQLTLFYLFNGLLSSISDNVFVGTIYINEAKAAMENGAISLKQFELLAVAINTGTNLPSVATPNGQAAFLFLLTSALAPLIRLSYGRMVWMALPYTIVLTLIGLLCVEFTLAPATEWMTQAGWLATLS</sequence>
<proteinExistence type="inferred from homology"/>
<organism>
    <name type="scientific">Salmonella typhi</name>
    <dbReference type="NCBI Taxonomy" id="90370"/>
    <lineage>
        <taxon>Bacteria</taxon>
        <taxon>Pseudomonadati</taxon>
        <taxon>Pseudomonadota</taxon>
        <taxon>Gammaproteobacteria</taxon>
        <taxon>Enterobacterales</taxon>
        <taxon>Enterobacteriaceae</taxon>
        <taxon>Salmonella</taxon>
    </lineage>
</organism>
<protein>
    <recommendedName>
        <fullName evidence="1">Na(+)/H(+) antiporter NhaB</fullName>
    </recommendedName>
    <alternativeName>
        <fullName evidence="1">Sodium/proton antiporter NhaB</fullName>
    </alternativeName>
</protein>
<keyword id="KW-0050">Antiport</keyword>
<keyword id="KW-0997">Cell inner membrane</keyword>
<keyword id="KW-1003">Cell membrane</keyword>
<keyword id="KW-0406">Ion transport</keyword>
<keyword id="KW-0472">Membrane</keyword>
<keyword id="KW-0915">Sodium</keyword>
<keyword id="KW-0739">Sodium transport</keyword>
<keyword id="KW-0812">Transmembrane</keyword>
<keyword id="KW-1133">Transmembrane helix</keyword>
<keyword id="KW-0813">Transport</keyword>
<dbReference type="EMBL" id="AE014613">
    <property type="protein sequence ID" value="AAO68737.1"/>
    <property type="molecule type" value="Genomic_DNA"/>
</dbReference>
<dbReference type="EMBL" id="AL513382">
    <property type="protein sequence ID" value="CAD05489.1"/>
    <property type="molecule type" value="Genomic_DNA"/>
</dbReference>
<dbReference type="RefSeq" id="NP_456313.1">
    <property type="nucleotide sequence ID" value="NC_003198.1"/>
</dbReference>
<dbReference type="RefSeq" id="WP_000406446.1">
    <property type="nucleotide sequence ID" value="NZ_WSUR01000004.1"/>
</dbReference>
<dbReference type="SMR" id="Q8Z684"/>
<dbReference type="STRING" id="220341.gene:17585854"/>
<dbReference type="KEGG" id="stt:t1071"/>
<dbReference type="KEGG" id="sty:STY1935"/>
<dbReference type="PATRIC" id="fig|220341.7.peg.1952"/>
<dbReference type="eggNOG" id="COG3067">
    <property type="taxonomic scope" value="Bacteria"/>
</dbReference>
<dbReference type="HOGENOM" id="CLU_041110_0_0_6"/>
<dbReference type="OMA" id="FFIRMAP"/>
<dbReference type="OrthoDB" id="5288732at2"/>
<dbReference type="Proteomes" id="UP000000541">
    <property type="component" value="Chromosome"/>
</dbReference>
<dbReference type="Proteomes" id="UP000002670">
    <property type="component" value="Chromosome"/>
</dbReference>
<dbReference type="GO" id="GO:0005886">
    <property type="term" value="C:plasma membrane"/>
    <property type="evidence" value="ECO:0007669"/>
    <property type="project" value="UniProtKB-SubCell"/>
</dbReference>
<dbReference type="GO" id="GO:0015385">
    <property type="term" value="F:sodium:proton antiporter activity"/>
    <property type="evidence" value="ECO:0007669"/>
    <property type="project" value="InterPro"/>
</dbReference>
<dbReference type="HAMAP" id="MF_01599">
    <property type="entry name" value="NhaB"/>
    <property type="match status" value="1"/>
</dbReference>
<dbReference type="InterPro" id="IPR004671">
    <property type="entry name" value="Na+/H+_antiporter_NhaB"/>
</dbReference>
<dbReference type="NCBIfam" id="TIGR00774">
    <property type="entry name" value="NhaB"/>
    <property type="match status" value="1"/>
</dbReference>
<dbReference type="NCBIfam" id="NF007093">
    <property type="entry name" value="PRK09547.1"/>
    <property type="match status" value="1"/>
</dbReference>
<dbReference type="PANTHER" id="PTHR43302:SF1">
    <property type="entry name" value="NA(+)_H(+) ANTIPORTER NHAB"/>
    <property type="match status" value="1"/>
</dbReference>
<dbReference type="PANTHER" id="PTHR43302">
    <property type="entry name" value="TRANSPORTER ARSB-RELATED"/>
    <property type="match status" value="1"/>
</dbReference>
<dbReference type="Pfam" id="PF06450">
    <property type="entry name" value="NhaB"/>
    <property type="match status" value="1"/>
</dbReference>